<name>RS2_GEODF</name>
<feature type="chain" id="PRO_1000194333" description="Small ribosomal subunit protein uS2">
    <location>
        <begin position="1"/>
        <end position="255"/>
    </location>
</feature>
<proteinExistence type="inferred from homology"/>
<accession>B9M5C6</accession>
<sequence length="255" mass="28176">MSNITMKELLEAGVHFGHQTKRWNPKMKPYIFGARNGIYIIDLQKTVRLFKSAYNFVFEAAQAGETMLFVGTKKQAQDSVAEEAQRCGMFFVNDRWLGGMLTNFSTVKQSIERLKRIDAMFADGTIEAYTKKEALQMEKERVKLEKTLGGIKGMNKLPGLLFVIDPKNEEIAVSEAKKLGIPVVAIVDTNCDPDNIDYVIPGNDDAIRAIRLLTSKVADAMIEGGQARNTQLQTDTEGAEFAAGEETGEGTVAEA</sequence>
<gene>
    <name evidence="1" type="primary">rpsB</name>
    <name type="ordered locus">Geob_1522</name>
</gene>
<comment type="similarity">
    <text evidence="1">Belongs to the universal ribosomal protein uS2 family.</text>
</comment>
<evidence type="ECO:0000255" key="1">
    <source>
        <dbReference type="HAMAP-Rule" id="MF_00291"/>
    </source>
</evidence>
<evidence type="ECO:0000305" key="2"/>
<protein>
    <recommendedName>
        <fullName evidence="1">Small ribosomal subunit protein uS2</fullName>
    </recommendedName>
    <alternativeName>
        <fullName evidence="2">30S ribosomal protein S2</fullName>
    </alternativeName>
</protein>
<dbReference type="EMBL" id="CP001390">
    <property type="protein sequence ID" value="ACM19881.1"/>
    <property type="molecule type" value="Genomic_DNA"/>
</dbReference>
<dbReference type="RefSeq" id="WP_012646610.1">
    <property type="nucleotide sequence ID" value="NC_011979.1"/>
</dbReference>
<dbReference type="SMR" id="B9M5C6"/>
<dbReference type="STRING" id="316067.Geob_1522"/>
<dbReference type="KEGG" id="geo:Geob_1522"/>
<dbReference type="eggNOG" id="COG0052">
    <property type="taxonomic scope" value="Bacteria"/>
</dbReference>
<dbReference type="HOGENOM" id="CLU_040318_1_2_7"/>
<dbReference type="OrthoDB" id="9808036at2"/>
<dbReference type="Proteomes" id="UP000007721">
    <property type="component" value="Chromosome"/>
</dbReference>
<dbReference type="GO" id="GO:0022627">
    <property type="term" value="C:cytosolic small ribosomal subunit"/>
    <property type="evidence" value="ECO:0007669"/>
    <property type="project" value="TreeGrafter"/>
</dbReference>
<dbReference type="GO" id="GO:0003735">
    <property type="term" value="F:structural constituent of ribosome"/>
    <property type="evidence" value="ECO:0007669"/>
    <property type="project" value="InterPro"/>
</dbReference>
<dbReference type="GO" id="GO:0006412">
    <property type="term" value="P:translation"/>
    <property type="evidence" value="ECO:0007669"/>
    <property type="project" value="UniProtKB-UniRule"/>
</dbReference>
<dbReference type="CDD" id="cd01425">
    <property type="entry name" value="RPS2"/>
    <property type="match status" value="1"/>
</dbReference>
<dbReference type="FunFam" id="1.10.287.610:FF:000001">
    <property type="entry name" value="30S ribosomal protein S2"/>
    <property type="match status" value="1"/>
</dbReference>
<dbReference type="Gene3D" id="3.40.50.10490">
    <property type="entry name" value="Glucose-6-phosphate isomerase like protein, domain 1"/>
    <property type="match status" value="1"/>
</dbReference>
<dbReference type="Gene3D" id="1.10.287.610">
    <property type="entry name" value="Helix hairpin bin"/>
    <property type="match status" value="1"/>
</dbReference>
<dbReference type="HAMAP" id="MF_00291_B">
    <property type="entry name" value="Ribosomal_uS2_B"/>
    <property type="match status" value="1"/>
</dbReference>
<dbReference type="InterPro" id="IPR001865">
    <property type="entry name" value="Ribosomal_uS2"/>
</dbReference>
<dbReference type="InterPro" id="IPR005706">
    <property type="entry name" value="Ribosomal_uS2_bac/mit/plastid"/>
</dbReference>
<dbReference type="InterPro" id="IPR018130">
    <property type="entry name" value="Ribosomal_uS2_CS"/>
</dbReference>
<dbReference type="InterPro" id="IPR023591">
    <property type="entry name" value="Ribosomal_uS2_flav_dom_sf"/>
</dbReference>
<dbReference type="NCBIfam" id="TIGR01011">
    <property type="entry name" value="rpsB_bact"/>
    <property type="match status" value="1"/>
</dbReference>
<dbReference type="PANTHER" id="PTHR12534">
    <property type="entry name" value="30S RIBOSOMAL PROTEIN S2 PROKARYOTIC AND ORGANELLAR"/>
    <property type="match status" value="1"/>
</dbReference>
<dbReference type="PANTHER" id="PTHR12534:SF0">
    <property type="entry name" value="SMALL RIBOSOMAL SUBUNIT PROTEIN US2M"/>
    <property type="match status" value="1"/>
</dbReference>
<dbReference type="Pfam" id="PF00318">
    <property type="entry name" value="Ribosomal_S2"/>
    <property type="match status" value="1"/>
</dbReference>
<dbReference type="PRINTS" id="PR00395">
    <property type="entry name" value="RIBOSOMALS2"/>
</dbReference>
<dbReference type="SUPFAM" id="SSF52313">
    <property type="entry name" value="Ribosomal protein S2"/>
    <property type="match status" value="1"/>
</dbReference>
<dbReference type="PROSITE" id="PS00962">
    <property type="entry name" value="RIBOSOMAL_S2_1"/>
    <property type="match status" value="1"/>
</dbReference>
<dbReference type="PROSITE" id="PS00963">
    <property type="entry name" value="RIBOSOMAL_S2_2"/>
    <property type="match status" value="1"/>
</dbReference>
<reference key="1">
    <citation type="submission" date="2009-01" db="EMBL/GenBank/DDBJ databases">
        <title>Complete sequence of Geobacter sp. FRC-32.</title>
        <authorList>
            <consortium name="US DOE Joint Genome Institute"/>
            <person name="Lucas S."/>
            <person name="Copeland A."/>
            <person name="Lapidus A."/>
            <person name="Glavina del Rio T."/>
            <person name="Dalin E."/>
            <person name="Tice H."/>
            <person name="Bruce D."/>
            <person name="Goodwin L."/>
            <person name="Pitluck S."/>
            <person name="Saunders E."/>
            <person name="Brettin T."/>
            <person name="Detter J.C."/>
            <person name="Han C."/>
            <person name="Larimer F."/>
            <person name="Land M."/>
            <person name="Hauser L."/>
            <person name="Kyrpides N."/>
            <person name="Ovchinnikova G."/>
            <person name="Kostka J."/>
            <person name="Richardson P."/>
        </authorList>
    </citation>
    <scope>NUCLEOTIDE SEQUENCE [LARGE SCALE GENOMIC DNA]</scope>
    <source>
        <strain>DSM 22248 / JCM 15807 / FRC-32</strain>
    </source>
</reference>
<keyword id="KW-1185">Reference proteome</keyword>
<keyword id="KW-0687">Ribonucleoprotein</keyword>
<keyword id="KW-0689">Ribosomal protein</keyword>
<organism>
    <name type="scientific">Geotalea daltonii (strain DSM 22248 / JCM 15807 / FRC-32)</name>
    <name type="common">Geobacter daltonii</name>
    <dbReference type="NCBI Taxonomy" id="316067"/>
    <lineage>
        <taxon>Bacteria</taxon>
        <taxon>Pseudomonadati</taxon>
        <taxon>Thermodesulfobacteriota</taxon>
        <taxon>Desulfuromonadia</taxon>
        <taxon>Geobacterales</taxon>
        <taxon>Geobacteraceae</taxon>
        <taxon>Geotalea</taxon>
    </lineage>
</organism>